<name>DRE1F_ORYSJ</name>
<keyword id="KW-0010">Activator</keyword>
<keyword id="KW-0238">DNA-binding</keyword>
<keyword id="KW-0539">Nucleus</keyword>
<keyword id="KW-1185">Reference proteome</keyword>
<keyword id="KW-0346">Stress response</keyword>
<keyword id="KW-0804">Transcription</keyword>
<keyword id="KW-0805">Transcription regulation</keyword>
<accession>Q8S9Z5</accession>
<accession>A0A0P0VDC3</accession>
<accession>A3A1X8</accession>
<proteinExistence type="inferred from homology"/>
<reference key="1">
    <citation type="journal article" date="2005" name="Plant Mol. Biol.">
        <title>Structural, functional, and phylogenetic characterization of a large CBF gene family in barley.</title>
        <authorList>
            <person name="Skinner J.S."/>
            <person name="von Zitzewitz J."/>
            <person name="Szuecs P."/>
            <person name="Marquez-Cedillo L."/>
            <person name="Filichkin T."/>
            <person name="Amundsen K."/>
            <person name="Stockinger E.J."/>
            <person name="Thomashow M.F."/>
            <person name="Chen T.H.H."/>
            <person name="Hayes P.M."/>
        </authorList>
    </citation>
    <scope>NUCLEOTIDE SEQUENCE [GENOMIC DNA]</scope>
    <scope>GENE FAMILY</scope>
    <source>
        <strain>cv. Nipponbare</strain>
    </source>
</reference>
<reference key="2">
    <citation type="journal article" date="2002" name="Nature">
        <title>The genome sequence and structure of rice chromosome 1.</title>
        <authorList>
            <person name="Sasaki T."/>
            <person name="Matsumoto T."/>
            <person name="Yamamoto K."/>
            <person name="Sakata K."/>
            <person name="Baba T."/>
            <person name="Katayose Y."/>
            <person name="Wu J."/>
            <person name="Niimura Y."/>
            <person name="Cheng Z."/>
            <person name="Nagamura Y."/>
            <person name="Antonio B.A."/>
            <person name="Kanamori H."/>
            <person name="Hosokawa S."/>
            <person name="Masukawa M."/>
            <person name="Arikawa K."/>
            <person name="Chiden Y."/>
            <person name="Hayashi M."/>
            <person name="Okamoto M."/>
            <person name="Ando T."/>
            <person name="Aoki H."/>
            <person name="Arita K."/>
            <person name="Hamada M."/>
            <person name="Harada C."/>
            <person name="Hijishita S."/>
            <person name="Honda M."/>
            <person name="Ichikawa Y."/>
            <person name="Idonuma A."/>
            <person name="Iijima M."/>
            <person name="Ikeda M."/>
            <person name="Ikeno M."/>
            <person name="Ito S."/>
            <person name="Ito T."/>
            <person name="Ito Y."/>
            <person name="Ito Y."/>
            <person name="Iwabuchi A."/>
            <person name="Kamiya K."/>
            <person name="Karasawa W."/>
            <person name="Katagiri S."/>
            <person name="Kikuta A."/>
            <person name="Kobayashi N."/>
            <person name="Kono I."/>
            <person name="Machita K."/>
            <person name="Maehara T."/>
            <person name="Mizuno H."/>
            <person name="Mizubayashi T."/>
            <person name="Mukai Y."/>
            <person name="Nagasaki H."/>
            <person name="Nakashima M."/>
            <person name="Nakama Y."/>
            <person name="Nakamichi Y."/>
            <person name="Nakamura M."/>
            <person name="Namiki N."/>
            <person name="Negishi M."/>
            <person name="Ohta I."/>
            <person name="Ono N."/>
            <person name="Saji S."/>
            <person name="Sakai K."/>
            <person name="Shibata M."/>
            <person name="Shimokawa T."/>
            <person name="Shomura A."/>
            <person name="Song J."/>
            <person name="Takazaki Y."/>
            <person name="Terasawa K."/>
            <person name="Tsuji K."/>
            <person name="Waki K."/>
            <person name="Yamagata H."/>
            <person name="Yamane H."/>
            <person name="Yoshiki S."/>
            <person name="Yoshihara R."/>
            <person name="Yukawa K."/>
            <person name="Zhong H."/>
            <person name="Iwama H."/>
            <person name="Endo T."/>
            <person name="Ito H."/>
            <person name="Hahn J.H."/>
            <person name="Kim H.-I."/>
            <person name="Eun M.-Y."/>
            <person name="Yano M."/>
            <person name="Jiang J."/>
            <person name="Gojobori T."/>
        </authorList>
    </citation>
    <scope>NUCLEOTIDE SEQUENCE [LARGE SCALE GENOMIC DNA]</scope>
    <source>
        <strain>cv. Nipponbare</strain>
    </source>
</reference>
<reference key="3">
    <citation type="journal article" date="2005" name="Nature">
        <title>The map-based sequence of the rice genome.</title>
        <authorList>
            <consortium name="International rice genome sequencing project (IRGSP)"/>
        </authorList>
    </citation>
    <scope>NUCLEOTIDE SEQUENCE [LARGE SCALE GENOMIC DNA]</scope>
    <source>
        <strain>cv. Nipponbare</strain>
    </source>
</reference>
<reference key="4">
    <citation type="journal article" date="2008" name="Nucleic Acids Res.">
        <title>The rice annotation project database (RAP-DB): 2008 update.</title>
        <authorList>
            <consortium name="The rice annotation project (RAP)"/>
        </authorList>
    </citation>
    <scope>GENOME REANNOTATION</scope>
    <source>
        <strain>cv. Nipponbare</strain>
    </source>
</reference>
<reference key="5">
    <citation type="journal article" date="2013" name="Rice">
        <title>Improvement of the Oryza sativa Nipponbare reference genome using next generation sequence and optical map data.</title>
        <authorList>
            <person name="Kawahara Y."/>
            <person name="de la Bastide M."/>
            <person name="Hamilton J.P."/>
            <person name="Kanamori H."/>
            <person name="McCombie W.R."/>
            <person name="Ouyang S."/>
            <person name="Schwartz D.C."/>
            <person name="Tanaka T."/>
            <person name="Wu J."/>
            <person name="Zhou S."/>
            <person name="Childs K.L."/>
            <person name="Davidson R.M."/>
            <person name="Lin H."/>
            <person name="Quesada-Ocampo L."/>
            <person name="Vaillancourt B."/>
            <person name="Sakai H."/>
            <person name="Lee S.S."/>
            <person name="Kim J."/>
            <person name="Numa H."/>
            <person name="Itoh T."/>
            <person name="Buell C.R."/>
            <person name="Matsumoto T."/>
        </authorList>
    </citation>
    <scope>GENOME REANNOTATION</scope>
    <source>
        <strain>cv. Nipponbare</strain>
    </source>
</reference>
<reference key="6">
    <citation type="journal article" date="2005" name="PLoS Biol.">
        <title>The genomes of Oryza sativa: a history of duplications.</title>
        <authorList>
            <person name="Yu J."/>
            <person name="Wang J."/>
            <person name="Lin W."/>
            <person name="Li S."/>
            <person name="Li H."/>
            <person name="Zhou J."/>
            <person name="Ni P."/>
            <person name="Dong W."/>
            <person name="Hu S."/>
            <person name="Zeng C."/>
            <person name="Zhang J."/>
            <person name="Zhang Y."/>
            <person name="Li R."/>
            <person name="Xu Z."/>
            <person name="Li S."/>
            <person name="Li X."/>
            <person name="Zheng H."/>
            <person name="Cong L."/>
            <person name="Lin L."/>
            <person name="Yin J."/>
            <person name="Geng J."/>
            <person name="Li G."/>
            <person name="Shi J."/>
            <person name="Liu J."/>
            <person name="Lv H."/>
            <person name="Li J."/>
            <person name="Wang J."/>
            <person name="Deng Y."/>
            <person name="Ran L."/>
            <person name="Shi X."/>
            <person name="Wang X."/>
            <person name="Wu Q."/>
            <person name="Li C."/>
            <person name="Ren X."/>
            <person name="Wang J."/>
            <person name="Wang X."/>
            <person name="Li D."/>
            <person name="Liu D."/>
            <person name="Zhang X."/>
            <person name="Ji Z."/>
            <person name="Zhao W."/>
            <person name="Sun Y."/>
            <person name="Zhang Z."/>
            <person name="Bao J."/>
            <person name="Han Y."/>
            <person name="Dong L."/>
            <person name="Ji J."/>
            <person name="Chen P."/>
            <person name="Wu S."/>
            <person name="Liu J."/>
            <person name="Xiao Y."/>
            <person name="Bu D."/>
            <person name="Tan J."/>
            <person name="Yang L."/>
            <person name="Ye C."/>
            <person name="Zhang J."/>
            <person name="Xu J."/>
            <person name="Zhou Y."/>
            <person name="Yu Y."/>
            <person name="Zhang B."/>
            <person name="Zhuang S."/>
            <person name="Wei H."/>
            <person name="Liu B."/>
            <person name="Lei M."/>
            <person name="Yu H."/>
            <person name="Li Y."/>
            <person name="Xu H."/>
            <person name="Wei S."/>
            <person name="He X."/>
            <person name="Fang L."/>
            <person name="Zhang Z."/>
            <person name="Zhang Y."/>
            <person name="Huang X."/>
            <person name="Su Z."/>
            <person name="Tong W."/>
            <person name="Li J."/>
            <person name="Tong Z."/>
            <person name="Li S."/>
            <person name="Ye J."/>
            <person name="Wang L."/>
            <person name="Fang L."/>
            <person name="Lei T."/>
            <person name="Chen C.-S."/>
            <person name="Chen H.-C."/>
            <person name="Xu Z."/>
            <person name="Li H."/>
            <person name="Huang H."/>
            <person name="Zhang F."/>
            <person name="Xu H."/>
            <person name="Li N."/>
            <person name="Zhao C."/>
            <person name="Li S."/>
            <person name="Dong L."/>
            <person name="Huang Y."/>
            <person name="Li L."/>
            <person name="Xi Y."/>
            <person name="Qi Q."/>
            <person name="Li W."/>
            <person name="Zhang B."/>
            <person name="Hu W."/>
            <person name="Zhang Y."/>
            <person name="Tian X."/>
            <person name="Jiao Y."/>
            <person name="Liang X."/>
            <person name="Jin J."/>
            <person name="Gao L."/>
            <person name="Zheng W."/>
            <person name="Hao B."/>
            <person name="Liu S.-M."/>
            <person name="Wang W."/>
            <person name="Yuan L."/>
            <person name="Cao M."/>
            <person name="McDermott J."/>
            <person name="Samudrala R."/>
            <person name="Wang J."/>
            <person name="Wong G.K.-S."/>
            <person name="Yang H."/>
        </authorList>
    </citation>
    <scope>NUCLEOTIDE SEQUENCE [LARGE SCALE GENOMIC DNA]</scope>
    <source>
        <strain>cv. Nipponbare</strain>
    </source>
</reference>
<reference key="7">
    <citation type="journal article" date="2006" name="Plant Physiol.">
        <title>Genome-wide analysis of the ERF gene family in Arabidopsis and rice.</title>
        <authorList>
            <person name="Nakano T."/>
            <person name="Suzuki K."/>
            <person name="Fujimura T."/>
            <person name="Shinshi H."/>
        </authorList>
    </citation>
    <scope>GENE FAMILY</scope>
    <scope>NOMENCLATURE</scope>
</reference>
<protein>
    <recommendedName>
        <fullName>Dehydration-responsive element-binding protein 1F</fullName>
        <shortName>Protein DREB1F</shortName>
    </recommendedName>
    <alternativeName>
        <fullName>Protein C-repeat-binding factor 2</fullName>
        <shortName>rCBF2</shortName>
    </alternativeName>
</protein>
<gene>
    <name type="primary">DREB1F</name>
    <name type="synonym">CBF2</name>
    <name type="synonym">ERF27</name>
    <name type="ordered locus">Os01g0968800</name>
    <name type="ordered locus">LOC_Os01g73770</name>
    <name type="ORF">OJ1656_A11.17</name>
    <name type="ORF">OsJ_004800</name>
</gene>
<feature type="chain" id="PRO_0000323044" description="Dehydration-responsive element-binding protein 1F">
    <location>
        <begin position="1"/>
        <end position="219"/>
    </location>
</feature>
<feature type="DNA-binding region" description="AP2/ERF" evidence="2">
    <location>
        <begin position="46"/>
        <end position="105"/>
    </location>
</feature>
<feature type="region of interest" description="Disordered" evidence="3">
    <location>
        <begin position="1"/>
        <end position="45"/>
    </location>
</feature>
<feature type="region of interest" description="Disordered" evidence="3">
    <location>
        <begin position="134"/>
        <end position="161"/>
    </location>
</feature>
<feature type="compositionally biased region" description="Low complexity" evidence="3">
    <location>
        <begin position="7"/>
        <end position="16"/>
    </location>
</feature>
<feature type="compositionally biased region" description="Basic residues" evidence="3">
    <location>
        <begin position="23"/>
        <end position="41"/>
    </location>
</feature>
<sequence length="219" mass="23818">MDTEDTSSASSSSVSPPSSPGGGHHHRLPPKRRAGRKKFRETRHPVYRGVRARAGGSRWVCEVREPQAQARIWLGTYPTPEMAARAHDVAAIALRGERGAELNFPDSPSTLPRARTASPEDIRLAAAQAAELYRRPPPPLALPEDPQEGTSGGGATATSGRPAAVFVDEDAIFDMPGLIDDMARGMMLTPPAIGRSLDDWAAIDDDDDHYHMDYKLWMD</sequence>
<comment type="function">
    <text evidence="1">Transcriptional activator that binds specifically to the DNA sequence 5'-[AG]CCGAC-3'. Binding to the C-repeat/DRE element mediates high salinity- and dehydration-inducible transcription (By similarity).</text>
</comment>
<comment type="subcellular location">
    <subcellularLocation>
        <location evidence="4">Nucleus</location>
    </subcellularLocation>
</comment>
<comment type="similarity">
    <text evidence="4">Belongs to the AP2/ERF transcription factor family. ERF subfamily.</text>
</comment>
<comment type="sequence caution" evidence="4">
    <conflict type="erroneous gene model prediction">
        <sequence resource="EMBL-CDS" id="EAZ14975"/>
    </conflict>
</comment>
<comment type="sequence caution" evidence="4">
    <conflict type="frameshift">
        <sequence resource="EMBL-CDS" id="EAZ14975"/>
    </conflict>
</comment>
<dbReference type="EMBL" id="AY785897">
    <property type="protein sequence ID" value="AAX23723.1"/>
    <property type="molecule type" value="Genomic_DNA"/>
</dbReference>
<dbReference type="EMBL" id="AP003448">
    <property type="protein sequence ID" value="BAB85326.1"/>
    <property type="molecule type" value="Genomic_DNA"/>
</dbReference>
<dbReference type="EMBL" id="AP008207">
    <property type="protein sequence ID" value="BAF07435.1"/>
    <property type="molecule type" value="Genomic_DNA"/>
</dbReference>
<dbReference type="EMBL" id="AP014957">
    <property type="protein sequence ID" value="BAS76412.1"/>
    <property type="molecule type" value="Genomic_DNA"/>
</dbReference>
<dbReference type="EMBL" id="CM000138">
    <property type="protein sequence ID" value="EAZ14975.1"/>
    <property type="status" value="ALT_SEQ"/>
    <property type="molecule type" value="Genomic_DNA"/>
</dbReference>
<dbReference type="RefSeq" id="XP_015645845.1">
    <property type="nucleotide sequence ID" value="XM_015790359.1"/>
</dbReference>
<dbReference type="SMR" id="Q8S9Z5"/>
<dbReference type="FunCoup" id="Q8S9Z5">
    <property type="interactions" value="8"/>
</dbReference>
<dbReference type="STRING" id="39947.Q8S9Z5"/>
<dbReference type="PaxDb" id="39947-Q8S9Z5"/>
<dbReference type="EnsemblPlants" id="Os01t0968800-01">
    <property type="protein sequence ID" value="Os01t0968800-01"/>
    <property type="gene ID" value="Os01g0968800"/>
</dbReference>
<dbReference type="Gramene" id="Os01t0968800-01">
    <property type="protein sequence ID" value="Os01t0968800-01"/>
    <property type="gene ID" value="Os01g0968800"/>
</dbReference>
<dbReference type="KEGG" id="dosa:Os01g0968800"/>
<dbReference type="eggNOG" id="ENOG502RZEY">
    <property type="taxonomic scope" value="Eukaryota"/>
</dbReference>
<dbReference type="HOGENOM" id="CLU_063331_1_0_1"/>
<dbReference type="InParanoid" id="Q8S9Z5"/>
<dbReference type="OMA" id="WDDHAYF"/>
<dbReference type="OrthoDB" id="676764at2759"/>
<dbReference type="Proteomes" id="UP000000763">
    <property type="component" value="Chromosome 1"/>
</dbReference>
<dbReference type="Proteomes" id="UP000007752">
    <property type="component" value="Chromosome 1"/>
</dbReference>
<dbReference type="Proteomes" id="UP000059680">
    <property type="component" value="Chromosome 1"/>
</dbReference>
<dbReference type="GO" id="GO:0005634">
    <property type="term" value="C:nucleus"/>
    <property type="evidence" value="ECO:0007669"/>
    <property type="project" value="UniProtKB-SubCell"/>
</dbReference>
<dbReference type="GO" id="GO:0003677">
    <property type="term" value="F:DNA binding"/>
    <property type="evidence" value="ECO:0007669"/>
    <property type="project" value="UniProtKB-KW"/>
</dbReference>
<dbReference type="GO" id="GO:0003700">
    <property type="term" value="F:DNA-binding transcription factor activity"/>
    <property type="evidence" value="ECO:0007669"/>
    <property type="project" value="InterPro"/>
</dbReference>
<dbReference type="CDD" id="cd00018">
    <property type="entry name" value="AP2"/>
    <property type="match status" value="1"/>
</dbReference>
<dbReference type="Gene3D" id="3.30.730.10">
    <property type="entry name" value="AP2/ERF domain"/>
    <property type="match status" value="1"/>
</dbReference>
<dbReference type="InterPro" id="IPR001471">
    <property type="entry name" value="AP2/ERF_dom"/>
</dbReference>
<dbReference type="InterPro" id="IPR036955">
    <property type="entry name" value="AP2/ERF_dom_sf"/>
</dbReference>
<dbReference type="InterPro" id="IPR016177">
    <property type="entry name" value="DNA-bd_dom_sf"/>
</dbReference>
<dbReference type="InterPro" id="IPR045277">
    <property type="entry name" value="DRE1A-I"/>
</dbReference>
<dbReference type="PANTHER" id="PTHR31839">
    <property type="entry name" value="DEHYDRATION-RESPONSIVE ELEMENT-BINDING PROTEIN 1D"/>
    <property type="match status" value="1"/>
</dbReference>
<dbReference type="PANTHER" id="PTHR31839:SF42">
    <property type="entry name" value="DEHYDRATION-RESPONSIVE ELEMENT-BINDING PROTEIN 1F"/>
    <property type="match status" value="1"/>
</dbReference>
<dbReference type="Pfam" id="PF00847">
    <property type="entry name" value="AP2"/>
    <property type="match status" value="1"/>
</dbReference>
<dbReference type="PRINTS" id="PR00367">
    <property type="entry name" value="ETHRSPELEMNT"/>
</dbReference>
<dbReference type="SMART" id="SM00380">
    <property type="entry name" value="AP2"/>
    <property type="match status" value="1"/>
</dbReference>
<dbReference type="SUPFAM" id="SSF54171">
    <property type="entry name" value="DNA-binding domain"/>
    <property type="match status" value="1"/>
</dbReference>
<dbReference type="PROSITE" id="PS51032">
    <property type="entry name" value="AP2_ERF"/>
    <property type="match status" value="1"/>
</dbReference>
<organism>
    <name type="scientific">Oryza sativa subsp. japonica</name>
    <name type="common">Rice</name>
    <dbReference type="NCBI Taxonomy" id="39947"/>
    <lineage>
        <taxon>Eukaryota</taxon>
        <taxon>Viridiplantae</taxon>
        <taxon>Streptophyta</taxon>
        <taxon>Embryophyta</taxon>
        <taxon>Tracheophyta</taxon>
        <taxon>Spermatophyta</taxon>
        <taxon>Magnoliopsida</taxon>
        <taxon>Liliopsida</taxon>
        <taxon>Poales</taxon>
        <taxon>Poaceae</taxon>
        <taxon>BOP clade</taxon>
        <taxon>Oryzoideae</taxon>
        <taxon>Oryzeae</taxon>
        <taxon>Oryzinae</taxon>
        <taxon>Oryza</taxon>
        <taxon>Oryza sativa</taxon>
    </lineage>
</organism>
<evidence type="ECO:0000250" key="1"/>
<evidence type="ECO:0000255" key="2">
    <source>
        <dbReference type="PROSITE-ProRule" id="PRU00366"/>
    </source>
</evidence>
<evidence type="ECO:0000256" key="3">
    <source>
        <dbReference type="SAM" id="MobiDB-lite"/>
    </source>
</evidence>
<evidence type="ECO:0000305" key="4"/>